<gene>
    <name evidence="1" type="primary">ung</name>
    <name type="ordered locus">SARI_00278</name>
</gene>
<comment type="function">
    <text evidence="1">Excises uracil residues from the DNA which can arise as a result of misincorporation of dUMP residues by DNA polymerase or due to deamination of cytosine.</text>
</comment>
<comment type="catalytic activity">
    <reaction evidence="1">
        <text>Hydrolyzes single-stranded DNA or mismatched double-stranded DNA and polynucleotides, releasing free uracil.</text>
        <dbReference type="EC" id="3.2.2.27"/>
    </reaction>
</comment>
<comment type="subcellular location">
    <subcellularLocation>
        <location evidence="1">Cytoplasm</location>
    </subcellularLocation>
</comment>
<comment type="similarity">
    <text evidence="1">Belongs to the uracil-DNA glycosylase (UDG) superfamily. UNG family.</text>
</comment>
<evidence type="ECO:0000255" key="1">
    <source>
        <dbReference type="HAMAP-Rule" id="MF_00148"/>
    </source>
</evidence>
<feature type="chain" id="PRO_1000076678" description="Uracil-DNA glycosylase">
    <location>
        <begin position="1"/>
        <end position="229"/>
    </location>
</feature>
<feature type="active site" description="Proton acceptor" evidence="1">
    <location>
        <position position="64"/>
    </location>
</feature>
<dbReference type="EC" id="3.2.2.27" evidence="1"/>
<dbReference type="EMBL" id="CP000880">
    <property type="protein sequence ID" value="ABX20220.1"/>
    <property type="molecule type" value="Genomic_DNA"/>
</dbReference>
<dbReference type="SMR" id="A9MGV9"/>
<dbReference type="STRING" id="41514.SARI_00278"/>
<dbReference type="KEGG" id="ses:SARI_00278"/>
<dbReference type="HOGENOM" id="CLU_032162_3_0_6"/>
<dbReference type="Proteomes" id="UP000002084">
    <property type="component" value="Chromosome"/>
</dbReference>
<dbReference type="GO" id="GO:0005737">
    <property type="term" value="C:cytoplasm"/>
    <property type="evidence" value="ECO:0007669"/>
    <property type="project" value="UniProtKB-SubCell"/>
</dbReference>
<dbReference type="GO" id="GO:0004844">
    <property type="term" value="F:uracil DNA N-glycosylase activity"/>
    <property type="evidence" value="ECO:0007669"/>
    <property type="project" value="UniProtKB-UniRule"/>
</dbReference>
<dbReference type="GO" id="GO:0097510">
    <property type="term" value="P:base-excision repair, AP site formation via deaminated base removal"/>
    <property type="evidence" value="ECO:0007669"/>
    <property type="project" value="TreeGrafter"/>
</dbReference>
<dbReference type="CDD" id="cd10027">
    <property type="entry name" value="UDG-F1-like"/>
    <property type="match status" value="1"/>
</dbReference>
<dbReference type="FunFam" id="3.40.470.10:FF:000001">
    <property type="entry name" value="Uracil-DNA glycosylase"/>
    <property type="match status" value="1"/>
</dbReference>
<dbReference type="Gene3D" id="3.40.470.10">
    <property type="entry name" value="Uracil-DNA glycosylase-like domain"/>
    <property type="match status" value="1"/>
</dbReference>
<dbReference type="HAMAP" id="MF_00148">
    <property type="entry name" value="UDG"/>
    <property type="match status" value="1"/>
</dbReference>
<dbReference type="InterPro" id="IPR002043">
    <property type="entry name" value="UDG_fam1"/>
</dbReference>
<dbReference type="InterPro" id="IPR018085">
    <property type="entry name" value="Ura-DNA_Glyclase_AS"/>
</dbReference>
<dbReference type="InterPro" id="IPR005122">
    <property type="entry name" value="Uracil-DNA_glycosylase-like"/>
</dbReference>
<dbReference type="InterPro" id="IPR036895">
    <property type="entry name" value="Uracil-DNA_glycosylase-like_sf"/>
</dbReference>
<dbReference type="NCBIfam" id="NF003588">
    <property type="entry name" value="PRK05254.1-1"/>
    <property type="match status" value="1"/>
</dbReference>
<dbReference type="NCBIfam" id="NF003589">
    <property type="entry name" value="PRK05254.1-2"/>
    <property type="match status" value="1"/>
</dbReference>
<dbReference type="NCBIfam" id="NF003591">
    <property type="entry name" value="PRK05254.1-4"/>
    <property type="match status" value="1"/>
</dbReference>
<dbReference type="NCBIfam" id="NF003592">
    <property type="entry name" value="PRK05254.1-5"/>
    <property type="match status" value="1"/>
</dbReference>
<dbReference type="NCBIfam" id="TIGR00628">
    <property type="entry name" value="ung"/>
    <property type="match status" value="1"/>
</dbReference>
<dbReference type="PANTHER" id="PTHR11264">
    <property type="entry name" value="URACIL-DNA GLYCOSYLASE"/>
    <property type="match status" value="1"/>
</dbReference>
<dbReference type="PANTHER" id="PTHR11264:SF0">
    <property type="entry name" value="URACIL-DNA GLYCOSYLASE"/>
    <property type="match status" value="1"/>
</dbReference>
<dbReference type="Pfam" id="PF03167">
    <property type="entry name" value="UDG"/>
    <property type="match status" value="1"/>
</dbReference>
<dbReference type="SMART" id="SM00986">
    <property type="entry name" value="UDG"/>
    <property type="match status" value="1"/>
</dbReference>
<dbReference type="SMART" id="SM00987">
    <property type="entry name" value="UreE_C"/>
    <property type="match status" value="1"/>
</dbReference>
<dbReference type="SUPFAM" id="SSF52141">
    <property type="entry name" value="Uracil-DNA glycosylase-like"/>
    <property type="match status" value="1"/>
</dbReference>
<dbReference type="PROSITE" id="PS00130">
    <property type="entry name" value="U_DNA_GLYCOSYLASE"/>
    <property type="match status" value="1"/>
</dbReference>
<accession>A9MGV9</accession>
<keyword id="KW-0963">Cytoplasm</keyword>
<keyword id="KW-0227">DNA damage</keyword>
<keyword id="KW-0234">DNA repair</keyword>
<keyword id="KW-0378">Hydrolase</keyword>
<keyword id="KW-1185">Reference proteome</keyword>
<sequence length="229" mass="25513">MATELTWHDVLADEKQQPYFINTLHTVAGERQSGITVYPPQKDVFNAFRFTELGDVKVVILGQDPYHGPGQAHGLAFSVRPGIAPPPSLVNMYKELEASIPGFVRPPHGYLESWARQGVLLLNTVLTVRAGQAHSHASLGWETFTDKVISLINQYREGVVFLLWGSHAQKKGAIIDPLRHHILKAPHPSPLSAHRGFFGCNHFALTNQWLEQHGEKPIDWTPVLPAESE</sequence>
<reference key="1">
    <citation type="submission" date="2007-11" db="EMBL/GenBank/DDBJ databases">
        <authorList>
            <consortium name="The Salmonella enterica serovar Arizonae Genome Sequencing Project"/>
            <person name="McClelland M."/>
            <person name="Sanderson E.K."/>
            <person name="Porwollik S."/>
            <person name="Spieth J."/>
            <person name="Clifton W.S."/>
            <person name="Fulton R."/>
            <person name="Chunyan W."/>
            <person name="Wollam A."/>
            <person name="Shah N."/>
            <person name="Pepin K."/>
            <person name="Bhonagiri V."/>
            <person name="Nash W."/>
            <person name="Johnson M."/>
            <person name="Thiruvilangam P."/>
            <person name="Wilson R."/>
        </authorList>
    </citation>
    <scope>NUCLEOTIDE SEQUENCE [LARGE SCALE GENOMIC DNA]</scope>
    <source>
        <strain>ATCC BAA-731 / CDC346-86 / RSK2980</strain>
    </source>
</reference>
<organism>
    <name type="scientific">Salmonella arizonae (strain ATCC BAA-731 / CDC346-86 / RSK2980)</name>
    <dbReference type="NCBI Taxonomy" id="41514"/>
    <lineage>
        <taxon>Bacteria</taxon>
        <taxon>Pseudomonadati</taxon>
        <taxon>Pseudomonadota</taxon>
        <taxon>Gammaproteobacteria</taxon>
        <taxon>Enterobacterales</taxon>
        <taxon>Enterobacteriaceae</taxon>
        <taxon>Salmonella</taxon>
    </lineage>
</organism>
<protein>
    <recommendedName>
        <fullName evidence="1">Uracil-DNA glycosylase</fullName>
        <shortName evidence="1">UDG</shortName>
        <ecNumber evidence="1">3.2.2.27</ecNumber>
    </recommendedName>
</protein>
<name>UNG_SALAR</name>
<proteinExistence type="inferred from homology"/>